<accession>A1B095</accession>
<proteinExistence type="inferred from homology"/>
<protein>
    <recommendedName>
        <fullName evidence="1">DNA mismatch repair protein MutS</fullName>
    </recommendedName>
</protein>
<organism>
    <name type="scientific">Paracoccus denitrificans (strain Pd 1222)</name>
    <dbReference type="NCBI Taxonomy" id="318586"/>
    <lineage>
        <taxon>Bacteria</taxon>
        <taxon>Pseudomonadati</taxon>
        <taxon>Pseudomonadota</taxon>
        <taxon>Alphaproteobacteria</taxon>
        <taxon>Rhodobacterales</taxon>
        <taxon>Paracoccaceae</taxon>
        <taxon>Paracoccus</taxon>
    </lineage>
</organism>
<reference key="1">
    <citation type="submission" date="2006-12" db="EMBL/GenBank/DDBJ databases">
        <title>Complete sequence of chromosome 1 of Paracoccus denitrificans PD1222.</title>
        <authorList>
            <person name="Copeland A."/>
            <person name="Lucas S."/>
            <person name="Lapidus A."/>
            <person name="Barry K."/>
            <person name="Detter J.C."/>
            <person name="Glavina del Rio T."/>
            <person name="Hammon N."/>
            <person name="Israni S."/>
            <person name="Dalin E."/>
            <person name="Tice H."/>
            <person name="Pitluck S."/>
            <person name="Munk A.C."/>
            <person name="Brettin T."/>
            <person name="Bruce D."/>
            <person name="Han C."/>
            <person name="Tapia R."/>
            <person name="Gilna P."/>
            <person name="Schmutz J."/>
            <person name="Larimer F."/>
            <person name="Land M."/>
            <person name="Hauser L."/>
            <person name="Kyrpides N."/>
            <person name="Lykidis A."/>
            <person name="Spiro S."/>
            <person name="Richardson D.J."/>
            <person name="Moir J.W.B."/>
            <person name="Ferguson S.J."/>
            <person name="van Spanning R.J.M."/>
            <person name="Richardson P."/>
        </authorList>
    </citation>
    <scope>NUCLEOTIDE SEQUENCE [LARGE SCALE GENOMIC DNA]</scope>
    <source>
        <strain>Pd 1222</strain>
    </source>
</reference>
<feature type="chain" id="PRO_0000335191" description="DNA mismatch repair protein MutS">
    <location>
        <begin position="1"/>
        <end position="878"/>
    </location>
</feature>
<feature type="binding site" evidence="1">
    <location>
        <begin position="626"/>
        <end position="633"/>
    </location>
    <ligand>
        <name>ATP</name>
        <dbReference type="ChEBI" id="CHEBI:30616"/>
    </ligand>
</feature>
<sequence length="878" mass="94745">MSDQPTPMMAQYLAIREANPGALLFYRMGDFYEMFFEDAVAAAAALDIALTKRGTHLGEPIPMCGVPVHAAESYLLTLIRKGFRVAIAEQMEDPAEAKKRGSKSVVARDVVRLVTPGTLTEESLLEARRHNFLASFASVRDESALAWVDISTGAFRVMPCPPARLAPELARHAPRELLAAEGANLDEIAAEAGAALTELPGGSFDSSAATRRLCALFSVETLDGFGQFSRAELAAMGAIADYLELTQKGRMPLIRPPVREALGGAMQIDAATRRNLELTQALSGGREGSLLAAIDRSVTAGGARLLERRISAPSRDLDEIHARQAAVAHLVDEPRLTADLREALSRAPDMDRALSRLALERGGPRDLAAIRAGLTQGAAIAAMLGNDEIAVLAEAAHDLTGHDALIDLLDEALVAEPPLLARDGGFVAPGYDEDLDETRRLRDEGRGVIARMQADYIAETGVQSLKIKHNNVLGYFIETTSTHAERMLAPPLNERFIHRQTTANQIRFTTVELSELETRILNARDRALEIEREIFARLSRAVLDRAGPVGQAARALAEIDLTAAFADLASGEGWVRPEVDASRAFVIEGGRHPVVERALKRKGEAFVANDCALTQGETPAIWLLTGPNMAGKSTFLRQNALIAILAQAGGFVPARRAHIGLVSQLFSRVGAADDLARGRSTFMVEMVETAAILNQADDHALVILDEIGRGTATWDGLSIAWAVMEHLHATNRCRALFATHYHEMTSLSARLPGVENATVAVREWEGEVIFLHEVRKGAADRSYGVQVARLAGLPPSVVDRARDILHQLESGERQGTGKPAALLDDLPLFRAAPAPAPAGKAKPSVVEDRLRSLNPDTISAREALDLVYELRGMLDGEP</sequence>
<keyword id="KW-0067">ATP-binding</keyword>
<keyword id="KW-0227">DNA damage</keyword>
<keyword id="KW-0234">DNA repair</keyword>
<keyword id="KW-0238">DNA-binding</keyword>
<keyword id="KW-0547">Nucleotide-binding</keyword>
<keyword id="KW-1185">Reference proteome</keyword>
<comment type="function">
    <text evidence="1">This protein is involved in the repair of mismatches in DNA. It is possible that it carries out the mismatch recognition step. This protein has a weak ATPase activity.</text>
</comment>
<comment type="similarity">
    <text evidence="1">Belongs to the DNA mismatch repair MutS family.</text>
</comment>
<dbReference type="EMBL" id="CP000489">
    <property type="protein sequence ID" value="ABL68939.1"/>
    <property type="molecule type" value="Genomic_DNA"/>
</dbReference>
<dbReference type="RefSeq" id="WP_011747167.1">
    <property type="nucleotide sequence ID" value="NC_008686.1"/>
</dbReference>
<dbReference type="SMR" id="A1B095"/>
<dbReference type="STRING" id="318586.Pden_0827"/>
<dbReference type="EnsemblBacteria" id="ABL68939">
    <property type="protein sequence ID" value="ABL68939"/>
    <property type="gene ID" value="Pden_0827"/>
</dbReference>
<dbReference type="GeneID" id="93452050"/>
<dbReference type="KEGG" id="pde:Pden_0827"/>
<dbReference type="eggNOG" id="COG0249">
    <property type="taxonomic scope" value="Bacteria"/>
</dbReference>
<dbReference type="HOGENOM" id="CLU_002472_4_0_5"/>
<dbReference type="OrthoDB" id="9802448at2"/>
<dbReference type="Proteomes" id="UP000000361">
    <property type="component" value="Chromosome 1"/>
</dbReference>
<dbReference type="GO" id="GO:0005829">
    <property type="term" value="C:cytosol"/>
    <property type="evidence" value="ECO:0007669"/>
    <property type="project" value="TreeGrafter"/>
</dbReference>
<dbReference type="GO" id="GO:0005524">
    <property type="term" value="F:ATP binding"/>
    <property type="evidence" value="ECO:0007669"/>
    <property type="project" value="UniProtKB-UniRule"/>
</dbReference>
<dbReference type="GO" id="GO:0140664">
    <property type="term" value="F:ATP-dependent DNA damage sensor activity"/>
    <property type="evidence" value="ECO:0007669"/>
    <property type="project" value="InterPro"/>
</dbReference>
<dbReference type="GO" id="GO:0003684">
    <property type="term" value="F:damaged DNA binding"/>
    <property type="evidence" value="ECO:0007669"/>
    <property type="project" value="UniProtKB-UniRule"/>
</dbReference>
<dbReference type="GO" id="GO:0030983">
    <property type="term" value="F:mismatched DNA binding"/>
    <property type="evidence" value="ECO:0007669"/>
    <property type="project" value="InterPro"/>
</dbReference>
<dbReference type="GO" id="GO:0006298">
    <property type="term" value="P:mismatch repair"/>
    <property type="evidence" value="ECO:0007669"/>
    <property type="project" value="UniProtKB-UniRule"/>
</dbReference>
<dbReference type="CDD" id="cd03284">
    <property type="entry name" value="ABC_MutS1"/>
    <property type="match status" value="1"/>
</dbReference>
<dbReference type="FunFam" id="3.40.1170.10:FF:000001">
    <property type="entry name" value="DNA mismatch repair protein MutS"/>
    <property type="match status" value="1"/>
</dbReference>
<dbReference type="FunFam" id="3.40.50.300:FF:000870">
    <property type="entry name" value="MutS protein homolog 4"/>
    <property type="match status" value="1"/>
</dbReference>
<dbReference type="Gene3D" id="1.10.1420.10">
    <property type="match status" value="2"/>
</dbReference>
<dbReference type="Gene3D" id="6.10.140.430">
    <property type="match status" value="1"/>
</dbReference>
<dbReference type="Gene3D" id="3.40.1170.10">
    <property type="entry name" value="DNA repair protein MutS, domain I"/>
    <property type="match status" value="1"/>
</dbReference>
<dbReference type="Gene3D" id="3.30.420.110">
    <property type="entry name" value="MutS, connector domain"/>
    <property type="match status" value="1"/>
</dbReference>
<dbReference type="Gene3D" id="3.40.50.300">
    <property type="entry name" value="P-loop containing nucleotide triphosphate hydrolases"/>
    <property type="match status" value="1"/>
</dbReference>
<dbReference type="HAMAP" id="MF_00096">
    <property type="entry name" value="MutS"/>
    <property type="match status" value="1"/>
</dbReference>
<dbReference type="InterPro" id="IPR005748">
    <property type="entry name" value="DNA_mismatch_repair_MutS"/>
</dbReference>
<dbReference type="InterPro" id="IPR007695">
    <property type="entry name" value="DNA_mismatch_repair_MutS-lik_N"/>
</dbReference>
<dbReference type="InterPro" id="IPR017261">
    <property type="entry name" value="DNA_mismatch_repair_MutS/MSH"/>
</dbReference>
<dbReference type="InterPro" id="IPR000432">
    <property type="entry name" value="DNA_mismatch_repair_MutS_C"/>
</dbReference>
<dbReference type="InterPro" id="IPR007861">
    <property type="entry name" value="DNA_mismatch_repair_MutS_clamp"/>
</dbReference>
<dbReference type="InterPro" id="IPR007696">
    <property type="entry name" value="DNA_mismatch_repair_MutS_core"/>
</dbReference>
<dbReference type="InterPro" id="IPR016151">
    <property type="entry name" value="DNA_mismatch_repair_MutS_N"/>
</dbReference>
<dbReference type="InterPro" id="IPR036187">
    <property type="entry name" value="DNA_mismatch_repair_MutS_sf"/>
</dbReference>
<dbReference type="InterPro" id="IPR007860">
    <property type="entry name" value="DNA_mmatch_repair_MutS_con_dom"/>
</dbReference>
<dbReference type="InterPro" id="IPR045076">
    <property type="entry name" value="MutS"/>
</dbReference>
<dbReference type="InterPro" id="IPR036678">
    <property type="entry name" value="MutS_con_dom_sf"/>
</dbReference>
<dbReference type="InterPro" id="IPR027417">
    <property type="entry name" value="P-loop_NTPase"/>
</dbReference>
<dbReference type="NCBIfam" id="TIGR01070">
    <property type="entry name" value="mutS1"/>
    <property type="match status" value="1"/>
</dbReference>
<dbReference type="NCBIfam" id="NF003810">
    <property type="entry name" value="PRK05399.1"/>
    <property type="match status" value="1"/>
</dbReference>
<dbReference type="PANTHER" id="PTHR11361:SF34">
    <property type="entry name" value="DNA MISMATCH REPAIR PROTEIN MSH1, MITOCHONDRIAL"/>
    <property type="match status" value="1"/>
</dbReference>
<dbReference type="PANTHER" id="PTHR11361">
    <property type="entry name" value="DNA MISMATCH REPAIR PROTEIN MUTS FAMILY MEMBER"/>
    <property type="match status" value="1"/>
</dbReference>
<dbReference type="Pfam" id="PF01624">
    <property type="entry name" value="MutS_I"/>
    <property type="match status" value="1"/>
</dbReference>
<dbReference type="Pfam" id="PF05188">
    <property type="entry name" value="MutS_II"/>
    <property type="match status" value="1"/>
</dbReference>
<dbReference type="Pfam" id="PF05192">
    <property type="entry name" value="MutS_III"/>
    <property type="match status" value="1"/>
</dbReference>
<dbReference type="Pfam" id="PF05190">
    <property type="entry name" value="MutS_IV"/>
    <property type="match status" value="1"/>
</dbReference>
<dbReference type="Pfam" id="PF00488">
    <property type="entry name" value="MutS_V"/>
    <property type="match status" value="1"/>
</dbReference>
<dbReference type="PIRSF" id="PIRSF037677">
    <property type="entry name" value="DNA_mis_repair_Msh6"/>
    <property type="match status" value="1"/>
</dbReference>
<dbReference type="SMART" id="SM00534">
    <property type="entry name" value="MUTSac"/>
    <property type="match status" value="1"/>
</dbReference>
<dbReference type="SMART" id="SM00533">
    <property type="entry name" value="MUTSd"/>
    <property type="match status" value="1"/>
</dbReference>
<dbReference type="SUPFAM" id="SSF55271">
    <property type="entry name" value="DNA repair protein MutS, domain I"/>
    <property type="match status" value="1"/>
</dbReference>
<dbReference type="SUPFAM" id="SSF53150">
    <property type="entry name" value="DNA repair protein MutS, domain II"/>
    <property type="match status" value="1"/>
</dbReference>
<dbReference type="SUPFAM" id="SSF48334">
    <property type="entry name" value="DNA repair protein MutS, domain III"/>
    <property type="match status" value="1"/>
</dbReference>
<dbReference type="SUPFAM" id="SSF52540">
    <property type="entry name" value="P-loop containing nucleoside triphosphate hydrolases"/>
    <property type="match status" value="1"/>
</dbReference>
<dbReference type="PROSITE" id="PS00486">
    <property type="entry name" value="DNA_MISMATCH_REPAIR_2"/>
    <property type="match status" value="1"/>
</dbReference>
<name>MUTS_PARDP</name>
<gene>
    <name evidence="1" type="primary">mutS</name>
    <name type="ordered locus">Pden_0827</name>
</gene>
<evidence type="ECO:0000255" key="1">
    <source>
        <dbReference type="HAMAP-Rule" id="MF_00096"/>
    </source>
</evidence>